<evidence type="ECO:0000250" key="1"/>
<evidence type="ECO:0000250" key="2">
    <source>
        <dbReference type="UniProtKB" id="P40933"/>
    </source>
</evidence>
<evidence type="ECO:0000250" key="3">
    <source>
        <dbReference type="UniProtKB" id="P48346"/>
    </source>
</evidence>
<evidence type="ECO:0000255" key="4"/>
<evidence type="ECO:0000305" key="5"/>
<accession>Q28028</accession>
<proteinExistence type="evidence at transcript level"/>
<sequence>MRILKPYLRSTSIQCYLCLLLNSHFLTEAGIHVFILGCISASLPKTEANWQYVINDLKTIEHLIQSIHMDATLYTESDAHPNCKVTAMQCFLLELRVILHESKNATIYEIIENLTMLANSNLSSIENKTELGCKECEELEEKSIKEFLKSFVHIVQMFINTS</sequence>
<organism>
    <name type="scientific">Bos taurus</name>
    <name type="common">Bovine</name>
    <dbReference type="NCBI Taxonomy" id="9913"/>
    <lineage>
        <taxon>Eukaryota</taxon>
        <taxon>Metazoa</taxon>
        <taxon>Chordata</taxon>
        <taxon>Craniata</taxon>
        <taxon>Vertebrata</taxon>
        <taxon>Euteleostomi</taxon>
        <taxon>Mammalia</taxon>
        <taxon>Eutheria</taxon>
        <taxon>Laurasiatheria</taxon>
        <taxon>Artiodactyla</taxon>
        <taxon>Ruminantia</taxon>
        <taxon>Pecora</taxon>
        <taxon>Bovidae</taxon>
        <taxon>Bovinae</taxon>
        <taxon>Bos</taxon>
    </lineage>
</organism>
<protein>
    <recommendedName>
        <fullName>Interleukin-15</fullName>
        <shortName>IL-15</shortName>
    </recommendedName>
</protein>
<name>IL15_BOVIN</name>
<comment type="function">
    <text evidence="2 3">Cytokine that plays a major role in the development of inflammatory and protective immune responses to microbial invaders and parasites by modulating immune cells of both the innate and adaptive immune systems. Stimulates the proliferation of natural killer cells, T-cells and B-cells and promotes the secretion of several cytokines. In monocytes, induces the production of IL8 and monocyte chemotactic protein 1/CCL2, two chemokines that attract neutrophils and monocytes respectively to sites of infection. Unlike most cytokines, which are secreted in soluble form, IL15 is expressed in association with its high affinity IL15RA on the surface of IL15-producing cells and delivers signals to target cells that express IL2RB and IL2RG receptor subunits. Binding to its receptor triggers the phosphorylation of JAK1 and JAK3 and the recruitment and subsequent phosphorylation of signal transducer and activator of transcription-3/STAT3 and STAT5 (By similarity). In mast cells, induces the rapid tyrosine phosphorylation of STAT6 and thereby controls mast cell survival and release of cytokines such as IL4 (By similarity).</text>
</comment>
<comment type="subcellular location">
    <subcellularLocation>
        <location evidence="1">Secreted</location>
    </subcellularLocation>
</comment>
<comment type="similarity">
    <text evidence="5">Belongs to the IL-15/IL-21 family.</text>
</comment>
<reference key="1">
    <citation type="journal article" date="1997" name="J. Interferon Cytokine Res.">
        <title>Cloning and expression of bovine interleukin-15: analysis and modulation of transcription by exogenous stimulation.</title>
        <authorList>
            <person name="Canals A."/>
            <person name="Gasbarre L.C."/>
            <person name="Boyd P.C."/>
            <person name="Almeria S."/>
            <person name="Zarlenga D.S."/>
        </authorList>
    </citation>
    <scope>NUCLEOTIDE SEQUENCE [MRNA]</scope>
    <source>
        <strain>Holstein</strain>
    </source>
</reference>
<dbReference type="EMBL" id="U42433">
    <property type="protein sequence ID" value="AAA85130.1"/>
    <property type="molecule type" value="mRNA"/>
</dbReference>
<dbReference type="RefSeq" id="NP_776515.1">
    <property type="nucleotide sequence ID" value="NM_174090.1"/>
</dbReference>
<dbReference type="RefSeq" id="XP_005217586.1">
    <property type="nucleotide sequence ID" value="XM_005217529.5"/>
</dbReference>
<dbReference type="RefSeq" id="XP_015330859.1">
    <property type="nucleotide sequence ID" value="XM_015475373.1"/>
</dbReference>
<dbReference type="RefSeq" id="XP_015330860.1">
    <property type="nucleotide sequence ID" value="XM_015475374.1"/>
</dbReference>
<dbReference type="RefSeq" id="XP_015330861.1">
    <property type="nucleotide sequence ID" value="XM_015475375.3"/>
</dbReference>
<dbReference type="RefSeq" id="XP_015330862.1">
    <property type="nucleotide sequence ID" value="XM_015475376.3"/>
</dbReference>
<dbReference type="SMR" id="Q28028"/>
<dbReference type="FunCoup" id="Q28028">
    <property type="interactions" value="137"/>
</dbReference>
<dbReference type="STRING" id="9913.ENSBTAP00000059902"/>
<dbReference type="GlyCosmos" id="Q28028">
    <property type="glycosylation" value="4 sites, No reported glycans"/>
</dbReference>
<dbReference type="GlyGen" id="Q28028">
    <property type="glycosylation" value="4 sites"/>
</dbReference>
<dbReference type="PaxDb" id="9913-ENSBTAP00000024226"/>
<dbReference type="Ensembl" id="ENSBTAT00000024226.5">
    <property type="protein sequence ID" value="ENSBTAP00000024226.3"/>
    <property type="gene ID" value="ENSBTAG00000018200.5"/>
</dbReference>
<dbReference type="GeneID" id="281248"/>
<dbReference type="KEGG" id="bta:281248"/>
<dbReference type="CTD" id="3600"/>
<dbReference type="VEuPathDB" id="HostDB:ENSBTAG00000018200"/>
<dbReference type="VGNC" id="VGNC:30116">
    <property type="gene designation" value="IL15"/>
</dbReference>
<dbReference type="eggNOG" id="ENOG502SCMF">
    <property type="taxonomic scope" value="Eukaryota"/>
</dbReference>
<dbReference type="GeneTree" id="ENSGT00390000016264"/>
<dbReference type="HOGENOM" id="CLU_135111_0_0_1"/>
<dbReference type="InParanoid" id="Q28028"/>
<dbReference type="OMA" id="FVWGCIS"/>
<dbReference type="OrthoDB" id="8905762at2759"/>
<dbReference type="TreeFam" id="TF336199"/>
<dbReference type="Reactome" id="R-BTA-8983432">
    <property type="pathway name" value="Interleukin-15 signaling"/>
</dbReference>
<dbReference type="Proteomes" id="UP000009136">
    <property type="component" value="Chromosome 17"/>
</dbReference>
<dbReference type="Bgee" id="ENSBTAG00000018200">
    <property type="expression patterns" value="Expressed in neutrophil and 96 other cell types or tissues"/>
</dbReference>
<dbReference type="GO" id="GO:0005829">
    <property type="term" value="C:cytosol"/>
    <property type="evidence" value="ECO:0007669"/>
    <property type="project" value="Ensembl"/>
</dbReference>
<dbReference type="GO" id="GO:0005615">
    <property type="term" value="C:extracellular space"/>
    <property type="evidence" value="ECO:0000318"/>
    <property type="project" value="GO_Central"/>
</dbReference>
<dbReference type="GO" id="GO:0016607">
    <property type="term" value="C:nuclear speck"/>
    <property type="evidence" value="ECO:0007669"/>
    <property type="project" value="Ensembl"/>
</dbReference>
<dbReference type="GO" id="GO:0005125">
    <property type="term" value="F:cytokine activity"/>
    <property type="evidence" value="ECO:0000318"/>
    <property type="project" value="GO_Central"/>
</dbReference>
<dbReference type="GO" id="GO:0005126">
    <property type="term" value="F:cytokine receptor binding"/>
    <property type="evidence" value="ECO:0007669"/>
    <property type="project" value="InterPro"/>
</dbReference>
<dbReference type="GO" id="GO:0048469">
    <property type="term" value="P:cell maturation"/>
    <property type="evidence" value="ECO:0007669"/>
    <property type="project" value="Ensembl"/>
</dbReference>
<dbReference type="GO" id="GO:0045062">
    <property type="term" value="P:extrathymic T cell selection"/>
    <property type="evidence" value="ECO:0007669"/>
    <property type="project" value="Ensembl"/>
</dbReference>
<dbReference type="GO" id="GO:0006955">
    <property type="term" value="P:immune response"/>
    <property type="evidence" value="ECO:0007669"/>
    <property type="project" value="InterPro"/>
</dbReference>
<dbReference type="GO" id="GO:0035723">
    <property type="term" value="P:interleukin-15-mediated signaling pathway"/>
    <property type="evidence" value="ECO:0000250"/>
    <property type="project" value="UniProtKB"/>
</dbReference>
<dbReference type="GO" id="GO:0048535">
    <property type="term" value="P:lymph node development"/>
    <property type="evidence" value="ECO:0007669"/>
    <property type="project" value="Ensembl"/>
</dbReference>
<dbReference type="GO" id="GO:0030225">
    <property type="term" value="P:macrophage differentiation"/>
    <property type="evidence" value="ECO:0007669"/>
    <property type="project" value="Ensembl"/>
</dbReference>
<dbReference type="GO" id="GO:0001779">
    <property type="term" value="P:natural killer cell differentiation"/>
    <property type="evidence" value="ECO:0007669"/>
    <property type="project" value="Ensembl"/>
</dbReference>
<dbReference type="GO" id="GO:0001787">
    <property type="term" value="P:natural killer cell proliferation"/>
    <property type="evidence" value="ECO:0007669"/>
    <property type="project" value="Ensembl"/>
</dbReference>
<dbReference type="GO" id="GO:0120163">
    <property type="term" value="P:negative regulation of cold-induced thermogenesis"/>
    <property type="evidence" value="ECO:0007669"/>
    <property type="project" value="Ensembl"/>
</dbReference>
<dbReference type="GO" id="GO:0042119">
    <property type="term" value="P:neutrophil activation"/>
    <property type="evidence" value="ECO:0000250"/>
    <property type="project" value="UniProtKB"/>
</dbReference>
<dbReference type="GO" id="GO:0001866">
    <property type="term" value="P:NK T cell proliferation"/>
    <property type="evidence" value="ECO:0007669"/>
    <property type="project" value="Ensembl"/>
</dbReference>
<dbReference type="GO" id="GO:0001819">
    <property type="term" value="P:positive regulation of cytokine production"/>
    <property type="evidence" value="ECO:0000318"/>
    <property type="project" value="GO_Central"/>
</dbReference>
<dbReference type="GO" id="GO:0050778">
    <property type="term" value="P:positive regulation of immune response"/>
    <property type="evidence" value="ECO:0000318"/>
    <property type="project" value="GO_Central"/>
</dbReference>
<dbReference type="GO" id="GO:0032740">
    <property type="term" value="P:positive regulation of interleukin-17 production"/>
    <property type="evidence" value="ECO:0007669"/>
    <property type="project" value="Ensembl"/>
</dbReference>
<dbReference type="GO" id="GO:0032825">
    <property type="term" value="P:positive regulation of natural killer cell differentiation"/>
    <property type="evidence" value="ECO:0007669"/>
    <property type="project" value="Ensembl"/>
</dbReference>
<dbReference type="GO" id="GO:0032819">
    <property type="term" value="P:positive regulation of natural killer cell proliferation"/>
    <property type="evidence" value="ECO:0007669"/>
    <property type="project" value="Ensembl"/>
</dbReference>
<dbReference type="GO" id="GO:0050731">
    <property type="term" value="P:positive regulation of peptidyl-tyrosine phosphorylation"/>
    <property type="evidence" value="ECO:0000250"/>
    <property type="project" value="UniProtKB"/>
</dbReference>
<dbReference type="GO" id="GO:0050766">
    <property type="term" value="P:positive regulation of phagocytosis"/>
    <property type="evidence" value="ECO:0000250"/>
    <property type="project" value="UniProtKB"/>
</dbReference>
<dbReference type="GO" id="GO:0042102">
    <property type="term" value="P:positive regulation of T cell proliferation"/>
    <property type="evidence" value="ECO:0000318"/>
    <property type="project" value="GO_Central"/>
</dbReference>
<dbReference type="GO" id="GO:0050691">
    <property type="term" value="P:regulation of defense response to virus by host"/>
    <property type="evidence" value="ECO:0007669"/>
    <property type="project" value="Ensembl"/>
</dbReference>
<dbReference type="GO" id="GO:0045580">
    <property type="term" value="P:regulation of T cell differentiation"/>
    <property type="evidence" value="ECO:0007669"/>
    <property type="project" value="Ensembl"/>
</dbReference>
<dbReference type="FunFam" id="1.20.1250.70:FF:000001">
    <property type="entry name" value="Interleukin"/>
    <property type="match status" value="1"/>
</dbReference>
<dbReference type="Gene3D" id="1.20.1250.70">
    <property type="entry name" value="Interleukin-15/Interleukin-21"/>
    <property type="match status" value="1"/>
</dbReference>
<dbReference type="InterPro" id="IPR009079">
    <property type="entry name" value="4_helix_cytokine-like_core"/>
</dbReference>
<dbReference type="InterPro" id="IPR020439">
    <property type="entry name" value="IL-15"/>
</dbReference>
<dbReference type="InterPro" id="IPR003443">
    <property type="entry name" value="IL-15/IL-21_fam"/>
</dbReference>
<dbReference type="InterPro" id="IPR020466">
    <property type="entry name" value="IL-15_mml"/>
</dbReference>
<dbReference type="PANTHER" id="PTHR14356:SF3">
    <property type="entry name" value="INTERLEUKIN-15"/>
    <property type="match status" value="1"/>
</dbReference>
<dbReference type="PANTHER" id="PTHR14356">
    <property type="entry name" value="INTERLEUKIN-15-RELATED"/>
    <property type="match status" value="1"/>
</dbReference>
<dbReference type="Pfam" id="PF02372">
    <property type="entry name" value="IL15"/>
    <property type="match status" value="1"/>
</dbReference>
<dbReference type="PRINTS" id="PR01947">
    <property type="entry name" value="INTLKN15MAML"/>
</dbReference>
<dbReference type="PRINTS" id="PR01930">
    <property type="entry name" value="INTRLEUKIN15"/>
</dbReference>
<dbReference type="SUPFAM" id="SSF47266">
    <property type="entry name" value="4-helical cytokines"/>
    <property type="match status" value="1"/>
</dbReference>
<feature type="signal peptide" evidence="4">
    <location>
        <begin position="1"/>
        <end position="29"/>
    </location>
</feature>
<feature type="propeptide" id="PRO_0000015389" evidence="4">
    <location>
        <begin position="30"/>
        <end position="48"/>
    </location>
</feature>
<feature type="chain" id="PRO_0000015390" description="Interleukin-15">
    <location>
        <begin position="49"/>
        <end position="162"/>
    </location>
</feature>
<feature type="glycosylation site" description="N-linked (GlcNAc...) asparagine" evidence="4">
    <location>
        <position position="104"/>
    </location>
</feature>
<feature type="glycosylation site" description="N-linked (GlcNAc...) asparagine" evidence="4">
    <location>
        <position position="113"/>
    </location>
</feature>
<feature type="glycosylation site" description="N-linked (GlcNAc...) asparagine" evidence="4">
    <location>
        <position position="121"/>
    </location>
</feature>
<feature type="glycosylation site" description="N-linked (GlcNAc...) asparagine" evidence="4">
    <location>
        <position position="127"/>
    </location>
</feature>
<feature type="disulfide bond" evidence="1">
    <location>
        <begin position="83"/>
        <end position="133"/>
    </location>
</feature>
<feature type="disulfide bond" evidence="1">
    <location>
        <begin position="90"/>
        <end position="136"/>
    </location>
</feature>
<keyword id="KW-0202">Cytokine</keyword>
<keyword id="KW-1015">Disulfide bond</keyword>
<keyword id="KW-0325">Glycoprotein</keyword>
<keyword id="KW-1185">Reference proteome</keyword>
<keyword id="KW-0964">Secreted</keyword>
<keyword id="KW-0732">Signal</keyword>
<gene>
    <name type="primary">IL15</name>
</gene>